<protein>
    <recommendedName>
        <fullName>Probable histone H2A.1</fullName>
    </recommendedName>
</protein>
<sequence length="135" mass="14044">MAGRGKAIGAGAAKKATSRSSKAGLQFPVGRIARFLKAGKYAERVGAGAPVYLAAVLEYLAAEVLELAGNAARDNKKTRIVPRHIQLAVRNDEELTKLLGGATIASGGVMPNIHQHLLPKKAGSSKASTVDDDDN</sequence>
<accession>A2YMC5</accession>
<accession>B8B766</accession>
<feature type="chain" id="PRO_0000296119" description="Probable histone H2A.1">
    <location>
        <begin position="1"/>
        <end position="135"/>
    </location>
</feature>
<evidence type="ECO:0000250" key="1"/>
<evidence type="ECO:0000305" key="2"/>
<keyword id="KW-0158">Chromosome</keyword>
<keyword id="KW-0238">DNA-binding</keyword>
<keyword id="KW-0544">Nucleosome core</keyword>
<keyword id="KW-0539">Nucleus</keyword>
<keyword id="KW-1185">Reference proteome</keyword>
<dbReference type="EMBL" id="CM000132">
    <property type="protein sequence ID" value="EEC82225.1"/>
    <property type="molecule type" value="Genomic_DNA"/>
</dbReference>
<dbReference type="SMR" id="A2YMC5"/>
<dbReference type="STRING" id="39946.A2YMC5"/>
<dbReference type="EnsemblPlants" id="BGIOSGA025899-TA">
    <property type="protein sequence ID" value="BGIOSGA025899-PA"/>
    <property type="gene ID" value="BGIOSGA025899"/>
</dbReference>
<dbReference type="EnsemblPlants" id="OsGoSa_07g0018150.01">
    <property type="protein sequence ID" value="OsGoSa_07g0018150.01"/>
    <property type="gene ID" value="OsGoSa_07g0018150"/>
</dbReference>
<dbReference type="EnsemblPlants" id="OsIR64_07g0018860.01">
    <property type="protein sequence ID" value="OsIR64_07g0018860.01"/>
    <property type="gene ID" value="OsIR64_07g0018860"/>
</dbReference>
<dbReference type="EnsemblPlants" id="OsKYG_07g0018290.01">
    <property type="protein sequence ID" value="OsKYG_07g0018290.01"/>
    <property type="gene ID" value="OsKYG_07g0018290"/>
</dbReference>
<dbReference type="EnsemblPlants" id="OsLaMu_07g0018250.01">
    <property type="protein sequence ID" value="OsLaMu_07g0018250.01"/>
    <property type="gene ID" value="OsLaMu_07g0018250"/>
</dbReference>
<dbReference type="EnsemblPlants" id="OsLima_07g0018150.01">
    <property type="protein sequence ID" value="OsLima_07g0018150.01"/>
    <property type="gene ID" value="OsLima_07g0018150"/>
</dbReference>
<dbReference type="EnsemblPlants" id="OsLiXu_07g0018440.01">
    <property type="protein sequence ID" value="OsLiXu_07g0018440.01"/>
    <property type="gene ID" value="OsLiXu_07g0018440"/>
</dbReference>
<dbReference type="EnsemblPlants" id="OsPr106_07g0018360.01">
    <property type="protein sequence ID" value="OsPr106_07g0018360.01"/>
    <property type="gene ID" value="OsPr106_07g0018360"/>
</dbReference>
<dbReference type="EnsemblPlants" id="OsZS97_07G018110_01">
    <property type="protein sequence ID" value="OsZS97_07G018110_01"/>
    <property type="gene ID" value="OsZS97_07G018110"/>
</dbReference>
<dbReference type="Gramene" id="BGIOSGA025899-TA">
    <property type="protein sequence ID" value="BGIOSGA025899-PA"/>
    <property type="gene ID" value="BGIOSGA025899"/>
</dbReference>
<dbReference type="Gramene" id="OsGoSa_07g0018150.01">
    <property type="protein sequence ID" value="OsGoSa_07g0018150.01"/>
    <property type="gene ID" value="OsGoSa_07g0018150"/>
</dbReference>
<dbReference type="Gramene" id="OsIR64_07g0018860.01">
    <property type="protein sequence ID" value="OsIR64_07g0018860.01"/>
    <property type="gene ID" value="OsIR64_07g0018860"/>
</dbReference>
<dbReference type="Gramene" id="OsKYG_07g0018290.01">
    <property type="protein sequence ID" value="OsKYG_07g0018290.01"/>
    <property type="gene ID" value="OsKYG_07g0018290"/>
</dbReference>
<dbReference type="Gramene" id="OsLaMu_07g0018250.01">
    <property type="protein sequence ID" value="OsLaMu_07g0018250.01"/>
    <property type="gene ID" value="OsLaMu_07g0018250"/>
</dbReference>
<dbReference type="Gramene" id="OsLima_07g0018150.01">
    <property type="protein sequence ID" value="OsLima_07g0018150.01"/>
    <property type="gene ID" value="OsLima_07g0018150"/>
</dbReference>
<dbReference type="Gramene" id="OsLiXu_07g0018440.01">
    <property type="protein sequence ID" value="OsLiXu_07g0018440.01"/>
    <property type="gene ID" value="OsLiXu_07g0018440"/>
</dbReference>
<dbReference type="Gramene" id="OsPr106_07g0018360.01">
    <property type="protein sequence ID" value="OsPr106_07g0018360.01"/>
    <property type="gene ID" value="OsPr106_07g0018360"/>
</dbReference>
<dbReference type="Gramene" id="OsZS97_07G018110_01">
    <property type="protein sequence ID" value="OsZS97_07G018110_01"/>
    <property type="gene ID" value="OsZS97_07G018110"/>
</dbReference>
<dbReference type="HOGENOM" id="CLU_062828_3_0_1"/>
<dbReference type="OMA" id="ATHSHEK"/>
<dbReference type="OrthoDB" id="9421954at2759"/>
<dbReference type="Proteomes" id="UP000007015">
    <property type="component" value="Chromosome 7"/>
</dbReference>
<dbReference type="GO" id="GO:0000786">
    <property type="term" value="C:nucleosome"/>
    <property type="evidence" value="ECO:0007669"/>
    <property type="project" value="UniProtKB-KW"/>
</dbReference>
<dbReference type="GO" id="GO:0005634">
    <property type="term" value="C:nucleus"/>
    <property type="evidence" value="ECO:0007669"/>
    <property type="project" value="UniProtKB-SubCell"/>
</dbReference>
<dbReference type="GO" id="GO:0003677">
    <property type="term" value="F:DNA binding"/>
    <property type="evidence" value="ECO:0007669"/>
    <property type="project" value="UniProtKB-KW"/>
</dbReference>
<dbReference type="GO" id="GO:0046982">
    <property type="term" value="F:protein heterodimerization activity"/>
    <property type="evidence" value="ECO:0007669"/>
    <property type="project" value="InterPro"/>
</dbReference>
<dbReference type="GO" id="GO:0030527">
    <property type="term" value="F:structural constituent of chromatin"/>
    <property type="evidence" value="ECO:0007669"/>
    <property type="project" value="InterPro"/>
</dbReference>
<dbReference type="CDD" id="cd00074">
    <property type="entry name" value="HFD_H2A"/>
    <property type="match status" value="1"/>
</dbReference>
<dbReference type="FunFam" id="1.10.20.10:FF:000009">
    <property type="entry name" value="Histone H2A"/>
    <property type="match status" value="1"/>
</dbReference>
<dbReference type="Gene3D" id="1.10.20.10">
    <property type="entry name" value="Histone, subunit A"/>
    <property type="match status" value="1"/>
</dbReference>
<dbReference type="InterPro" id="IPR009072">
    <property type="entry name" value="Histone-fold"/>
</dbReference>
<dbReference type="InterPro" id="IPR002119">
    <property type="entry name" value="Histone_H2A"/>
</dbReference>
<dbReference type="InterPro" id="IPR007125">
    <property type="entry name" value="Histone_H2A/H2B/H3"/>
</dbReference>
<dbReference type="InterPro" id="IPR032454">
    <property type="entry name" value="Histone_H2A_C"/>
</dbReference>
<dbReference type="InterPro" id="IPR032458">
    <property type="entry name" value="Histone_H2A_CS"/>
</dbReference>
<dbReference type="PANTHER" id="PTHR23430">
    <property type="entry name" value="HISTONE H2A"/>
    <property type="match status" value="1"/>
</dbReference>
<dbReference type="Pfam" id="PF00125">
    <property type="entry name" value="Histone"/>
    <property type="match status" value="1"/>
</dbReference>
<dbReference type="Pfam" id="PF16211">
    <property type="entry name" value="Histone_H2A_C"/>
    <property type="match status" value="1"/>
</dbReference>
<dbReference type="PRINTS" id="PR00620">
    <property type="entry name" value="HISTONEH2A"/>
</dbReference>
<dbReference type="SMART" id="SM00414">
    <property type="entry name" value="H2A"/>
    <property type="match status" value="1"/>
</dbReference>
<dbReference type="SUPFAM" id="SSF47113">
    <property type="entry name" value="Histone-fold"/>
    <property type="match status" value="1"/>
</dbReference>
<dbReference type="PROSITE" id="PS00046">
    <property type="entry name" value="HISTONE_H2A"/>
    <property type="match status" value="1"/>
</dbReference>
<proteinExistence type="inferred from homology"/>
<comment type="function">
    <text>Core component of nucleosome. Nucleosomes wrap and compact DNA into chromatin, limiting DNA accessibility to the cellular machineries which require DNA as a template. Histones thereby play a central role in transcription regulation, DNA repair, DNA replication and chromosomal stability. DNA accessibility is regulated via a complex set of post-translational modifications of histones, also called histone code, and nucleosome remodeling.</text>
</comment>
<comment type="subunit">
    <text>The nucleosome is a histone octamer containing two molecules each of H2A, H2B, H3 and H4 assembled in one H3-H4 heterotetramer and two H2A-H2B heterodimers. The octamer wraps approximately 147 bp of DNA.</text>
</comment>
<comment type="subcellular location">
    <subcellularLocation>
        <location evidence="1">Nucleus</location>
    </subcellularLocation>
    <subcellularLocation>
        <location evidence="1">Chromosome</location>
    </subcellularLocation>
</comment>
<comment type="similarity">
    <text evidence="2">Belongs to the histone H2A family.</text>
</comment>
<reference key="1">
    <citation type="journal article" date="2005" name="PLoS Biol.">
        <title>The genomes of Oryza sativa: a history of duplications.</title>
        <authorList>
            <person name="Yu J."/>
            <person name="Wang J."/>
            <person name="Lin W."/>
            <person name="Li S."/>
            <person name="Li H."/>
            <person name="Zhou J."/>
            <person name="Ni P."/>
            <person name="Dong W."/>
            <person name="Hu S."/>
            <person name="Zeng C."/>
            <person name="Zhang J."/>
            <person name="Zhang Y."/>
            <person name="Li R."/>
            <person name="Xu Z."/>
            <person name="Li S."/>
            <person name="Li X."/>
            <person name="Zheng H."/>
            <person name="Cong L."/>
            <person name="Lin L."/>
            <person name="Yin J."/>
            <person name="Geng J."/>
            <person name="Li G."/>
            <person name="Shi J."/>
            <person name="Liu J."/>
            <person name="Lv H."/>
            <person name="Li J."/>
            <person name="Wang J."/>
            <person name="Deng Y."/>
            <person name="Ran L."/>
            <person name="Shi X."/>
            <person name="Wang X."/>
            <person name="Wu Q."/>
            <person name="Li C."/>
            <person name="Ren X."/>
            <person name="Wang J."/>
            <person name="Wang X."/>
            <person name="Li D."/>
            <person name="Liu D."/>
            <person name="Zhang X."/>
            <person name="Ji Z."/>
            <person name="Zhao W."/>
            <person name="Sun Y."/>
            <person name="Zhang Z."/>
            <person name="Bao J."/>
            <person name="Han Y."/>
            <person name="Dong L."/>
            <person name="Ji J."/>
            <person name="Chen P."/>
            <person name="Wu S."/>
            <person name="Liu J."/>
            <person name="Xiao Y."/>
            <person name="Bu D."/>
            <person name="Tan J."/>
            <person name="Yang L."/>
            <person name="Ye C."/>
            <person name="Zhang J."/>
            <person name="Xu J."/>
            <person name="Zhou Y."/>
            <person name="Yu Y."/>
            <person name="Zhang B."/>
            <person name="Zhuang S."/>
            <person name="Wei H."/>
            <person name="Liu B."/>
            <person name="Lei M."/>
            <person name="Yu H."/>
            <person name="Li Y."/>
            <person name="Xu H."/>
            <person name="Wei S."/>
            <person name="He X."/>
            <person name="Fang L."/>
            <person name="Zhang Z."/>
            <person name="Zhang Y."/>
            <person name="Huang X."/>
            <person name="Su Z."/>
            <person name="Tong W."/>
            <person name="Li J."/>
            <person name="Tong Z."/>
            <person name="Li S."/>
            <person name="Ye J."/>
            <person name="Wang L."/>
            <person name="Fang L."/>
            <person name="Lei T."/>
            <person name="Chen C.-S."/>
            <person name="Chen H.-C."/>
            <person name="Xu Z."/>
            <person name="Li H."/>
            <person name="Huang H."/>
            <person name="Zhang F."/>
            <person name="Xu H."/>
            <person name="Li N."/>
            <person name="Zhao C."/>
            <person name="Li S."/>
            <person name="Dong L."/>
            <person name="Huang Y."/>
            <person name="Li L."/>
            <person name="Xi Y."/>
            <person name="Qi Q."/>
            <person name="Li W."/>
            <person name="Zhang B."/>
            <person name="Hu W."/>
            <person name="Zhang Y."/>
            <person name="Tian X."/>
            <person name="Jiao Y."/>
            <person name="Liang X."/>
            <person name="Jin J."/>
            <person name="Gao L."/>
            <person name="Zheng W."/>
            <person name="Hao B."/>
            <person name="Liu S.-M."/>
            <person name="Wang W."/>
            <person name="Yuan L."/>
            <person name="Cao M."/>
            <person name="McDermott J."/>
            <person name="Samudrala R."/>
            <person name="Wang J."/>
            <person name="Wong G.K.-S."/>
            <person name="Yang H."/>
        </authorList>
    </citation>
    <scope>NUCLEOTIDE SEQUENCE [LARGE SCALE GENOMIC DNA]</scope>
    <source>
        <strain>cv. 93-11</strain>
    </source>
</reference>
<name>H2A1_ORYSI</name>
<organism>
    <name type="scientific">Oryza sativa subsp. indica</name>
    <name type="common">Rice</name>
    <dbReference type="NCBI Taxonomy" id="39946"/>
    <lineage>
        <taxon>Eukaryota</taxon>
        <taxon>Viridiplantae</taxon>
        <taxon>Streptophyta</taxon>
        <taxon>Embryophyta</taxon>
        <taxon>Tracheophyta</taxon>
        <taxon>Spermatophyta</taxon>
        <taxon>Magnoliopsida</taxon>
        <taxon>Liliopsida</taxon>
        <taxon>Poales</taxon>
        <taxon>Poaceae</taxon>
        <taxon>BOP clade</taxon>
        <taxon>Oryzoideae</taxon>
        <taxon>Oryzeae</taxon>
        <taxon>Oryzinae</taxon>
        <taxon>Oryza</taxon>
        <taxon>Oryza sativa</taxon>
    </lineage>
</organism>
<gene>
    <name type="ORF">OsI_26380</name>
</gene>